<protein>
    <recommendedName>
        <fullName>Uncharacterized protein ORF18</fullName>
    </recommendedName>
</protein>
<name>VG18_ICHVA</name>
<proteinExistence type="predicted"/>
<evidence type="ECO:0000256" key="1">
    <source>
        <dbReference type="SAM" id="MobiDB-lite"/>
    </source>
</evidence>
<gene>
    <name type="primary">ORF18</name>
</gene>
<accession>Q00120</accession>
<organism>
    <name type="scientific">Ictalurid herpesvirus 1 (strain Auburn)</name>
    <name type="common">IcHV-1</name>
    <name type="synonym">Channel catfish herpesvirus</name>
    <dbReference type="NCBI Taxonomy" id="766178"/>
    <lineage>
        <taxon>Viruses</taxon>
        <taxon>Duplodnaviria</taxon>
        <taxon>Heunggongvirae</taxon>
        <taxon>Peploviricota</taxon>
        <taxon>Herviviricetes</taxon>
        <taxon>Herpesvirales</taxon>
        <taxon>Alloherpesviridae</taxon>
        <taxon>Ictavirus</taxon>
        <taxon>Ictavirus ictaluridallo1</taxon>
        <taxon>Ictalurid herpesvirus 1</taxon>
    </lineage>
</organism>
<sequence>MKASQERSEARRTAHSVKEKKYMVMASPRKRPRDLEAEKAALWLEPSARLCLLNPPEMVTILLHHYAAEVSTSRQYRGGDFKGEPAFRFSPHLDPTVNRFIHPVSVLENPLAVSHTLLLHHGGLAMCPRFVAFTENRSKFPAAQYELFTVIFNEARVPIPQRVTEWLATLSPEEKTTVRILNWSGTTFEDQLELTERVLRSWADFSEYQLPSRHLSEFVTLKDSLRGYTDSSGHQYYHAKMDSVDETGVVYRVNLTRASIPRRFTLIVCHGTVAVTAVPVELTEDTFYKWLADDGDDGDGDDDGDDDGDDDGGDDDDE</sequence>
<feature type="chain" id="PRO_0000222101" description="Uncharacterized protein ORF18">
    <location>
        <begin position="1"/>
        <end position="318"/>
    </location>
</feature>
<feature type="region of interest" description="Disordered" evidence="1">
    <location>
        <begin position="1"/>
        <end position="29"/>
    </location>
</feature>
<feature type="region of interest" description="Disordered" evidence="1">
    <location>
        <begin position="293"/>
        <end position="318"/>
    </location>
</feature>
<feature type="compositionally biased region" description="Basic and acidic residues" evidence="1">
    <location>
        <begin position="1"/>
        <end position="22"/>
    </location>
</feature>
<keyword id="KW-1185">Reference proteome</keyword>
<organismHost>
    <name type="scientific">Ictaluridae</name>
    <name type="common">bullhead catfishes</name>
    <dbReference type="NCBI Taxonomy" id="7996"/>
</organismHost>
<reference key="1">
    <citation type="journal article" date="1992" name="Virology">
        <title>Channel catfish virus: a new type of herpesvirus.</title>
        <authorList>
            <person name="Davison A.J."/>
        </authorList>
    </citation>
    <scope>NUCLEOTIDE SEQUENCE [LARGE SCALE GENOMIC DNA]</scope>
</reference>
<dbReference type="EMBL" id="M75136">
    <property type="protein sequence ID" value="AAA88121.1"/>
    <property type="molecule type" value="Genomic_DNA"/>
</dbReference>
<dbReference type="PIR" id="A36788">
    <property type="entry name" value="A36788"/>
</dbReference>
<dbReference type="RefSeq" id="NP_041109.1">
    <property type="nucleotide sequence ID" value="NC_001493.2"/>
</dbReference>
<dbReference type="GeneID" id="1488407"/>
<dbReference type="KEGG" id="vg:1488407"/>
<dbReference type="Proteomes" id="UP000007643">
    <property type="component" value="Segment"/>
</dbReference>